<keyword id="KW-0067">ATP-binding</keyword>
<keyword id="KW-0963">Cytoplasm</keyword>
<keyword id="KW-0227">DNA damage</keyword>
<keyword id="KW-0228">DNA excision</keyword>
<keyword id="KW-0234">DNA repair</keyword>
<keyword id="KW-0267">Excision nuclease</keyword>
<keyword id="KW-0547">Nucleotide-binding</keyword>
<keyword id="KW-1185">Reference proteome</keyword>
<keyword id="KW-0742">SOS response</keyword>
<dbReference type="EMBL" id="CR936257">
    <property type="protein sequence ID" value="CAI48463.1"/>
    <property type="molecule type" value="Genomic_DNA"/>
</dbReference>
<dbReference type="RefSeq" id="WP_011322099.1">
    <property type="nucleotide sequence ID" value="NC_007426.1"/>
</dbReference>
<dbReference type="SMR" id="Q3ITS0"/>
<dbReference type="STRING" id="348780.NP_0744A"/>
<dbReference type="EnsemblBacteria" id="CAI48463">
    <property type="protein sequence ID" value="CAI48463"/>
    <property type="gene ID" value="NP_0744A"/>
</dbReference>
<dbReference type="GeneID" id="3703458"/>
<dbReference type="KEGG" id="nph:NP_0744A"/>
<dbReference type="eggNOG" id="arCOG04748">
    <property type="taxonomic scope" value="Archaea"/>
</dbReference>
<dbReference type="HOGENOM" id="CLU_009621_2_1_2"/>
<dbReference type="OrthoDB" id="8371at2157"/>
<dbReference type="Proteomes" id="UP000002698">
    <property type="component" value="Chromosome"/>
</dbReference>
<dbReference type="GO" id="GO:0005737">
    <property type="term" value="C:cytoplasm"/>
    <property type="evidence" value="ECO:0007669"/>
    <property type="project" value="UniProtKB-SubCell"/>
</dbReference>
<dbReference type="GO" id="GO:0009380">
    <property type="term" value="C:excinuclease repair complex"/>
    <property type="evidence" value="ECO:0007669"/>
    <property type="project" value="InterPro"/>
</dbReference>
<dbReference type="GO" id="GO:0005524">
    <property type="term" value="F:ATP binding"/>
    <property type="evidence" value="ECO:0007669"/>
    <property type="project" value="UniProtKB-UniRule"/>
</dbReference>
<dbReference type="GO" id="GO:0016887">
    <property type="term" value="F:ATP hydrolysis activity"/>
    <property type="evidence" value="ECO:0007669"/>
    <property type="project" value="InterPro"/>
</dbReference>
<dbReference type="GO" id="GO:0003677">
    <property type="term" value="F:DNA binding"/>
    <property type="evidence" value="ECO:0007669"/>
    <property type="project" value="UniProtKB-UniRule"/>
</dbReference>
<dbReference type="GO" id="GO:0009381">
    <property type="term" value="F:excinuclease ABC activity"/>
    <property type="evidence" value="ECO:0007669"/>
    <property type="project" value="UniProtKB-UniRule"/>
</dbReference>
<dbReference type="GO" id="GO:0006289">
    <property type="term" value="P:nucleotide-excision repair"/>
    <property type="evidence" value="ECO:0007669"/>
    <property type="project" value="UniProtKB-UniRule"/>
</dbReference>
<dbReference type="GO" id="GO:0009432">
    <property type="term" value="P:SOS response"/>
    <property type="evidence" value="ECO:0007669"/>
    <property type="project" value="UniProtKB-UniRule"/>
</dbReference>
<dbReference type="CDD" id="cd17916">
    <property type="entry name" value="DEXHc_UvrB"/>
    <property type="match status" value="1"/>
</dbReference>
<dbReference type="CDD" id="cd18790">
    <property type="entry name" value="SF2_C_UvrB"/>
    <property type="match status" value="1"/>
</dbReference>
<dbReference type="Gene3D" id="3.40.50.300">
    <property type="entry name" value="P-loop containing nucleotide triphosphate hydrolases"/>
    <property type="match status" value="3"/>
</dbReference>
<dbReference type="Gene3D" id="4.10.860.10">
    <property type="entry name" value="UVR domain"/>
    <property type="match status" value="1"/>
</dbReference>
<dbReference type="HAMAP" id="MF_00204">
    <property type="entry name" value="UvrB"/>
    <property type="match status" value="1"/>
</dbReference>
<dbReference type="InterPro" id="IPR006935">
    <property type="entry name" value="Helicase/UvrB_N"/>
</dbReference>
<dbReference type="InterPro" id="IPR014001">
    <property type="entry name" value="Helicase_ATP-bd"/>
</dbReference>
<dbReference type="InterPro" id="IPR001650">
    <property type="entry name" value="Helicase_C-like"/>
</dbReference>
<dbReference type="InterPro" id="IPR027417">
    <property type="entry name" value="P-loop_NTPase"/>
</dbReference>
<dbReference type="InterPro" id="IPR001943">
    <property type="entry name" value="UVR_dom"/>
</dbReference>
<dbReference type="InterPro" id="IPR036876">
    <property type="entry name" value="UVR_dom_sf"/>
</dbReference>
<dbReference type="InterPro" id="IPR004807">
    <property type="entry name" value="UvrB"/>
</dbReference>
<dbReference type="InterPro" id="IPR041471">
    <property type="entry name" value="UvrB_inter"/>
</dbReference>
<dbReference type="InterPro" id="IPR024759">
    <property type="entry name" value="UvrB_YAD/RRR_dom"/>
</dbReference>
<dbReference type="NCBIfam" id="NF003673">
    <property type="entry name" value="PRK05298.1"/>
    <property type="match status" value="1"/>
</dbReference>
<dbReference type="NCBIfam" id="TIGR00631">
    <property type="entry name" value="uvrb"/>
    <property type="match status" value="1"/>
</dbReference>
<dbReference type="PANTHER" id="PTHR24029">
    <property type="entry name" value="UVRABC SYSTEM PROTEIN B"/>
    <property type="match status" value="1"/>
</dbReference>
<dbReference type="PANTHER" id="PTHR24029:SF0">
    <property type="entry name" value="UVRABC SYSTEM PROTEIN B"/>
    <property type="match status" value="1"/>
</dbReference>
<dbReference type="Pfam" id="PF00271">
    <property type="entry name" value="Helicase_C"/>
    <property type="match status" value="1"/>
</dbReference>
<dbReference type="Pfam" id="PF04851">
    <property type="entry name" value="ResIII"/>
    <property type="match status" value="1"/>
</dbReference>
<dbReference type="Pfam" id="PF02151">
    <property type="entry name" value="UVR"/>
    <property type="match status" value="1"/>
</dbReference>
<dbReference type="Pfam" id="PF12344">
    <property type="entry name" value="UvrB"/>
    <property type="match status" value="1"/>
</dbReference>
<dbReference type="Pfam" id="PF17757">
    <property type="entry name" value="UvrB_inter"/>
    <property type="match status" value="1"/>
</dbReference>
<dbReference type="SMART" id="SM00487">
    <property type="entry name" value="DEXDc"/>
    <property type="match status" value="1"/>
</dbReference>
<dbReference type="SMART" id="SM00490">
    <property type="entry name" value="HELICc"/>
    <property type="match status" value="1"/>
</dbReference>
<dbReference type="SUPFAM" id="SSF46600">
    <property type="entry name" value="C-terminal UvrC-binding domain of UvrB"/>
    <property type="match status" value="1"/>
</dbReference>
<dbReference type="SUPFAM" id="SSF52540">
    <property type="entry name" value="P-loop containing nucleoside triphosphate hydrolases"/>
    <property type="match status" value="2"/>
</dbReference>
<dbReference type="PROSITE" id="PS51192">
    <property type="entry name" value="HELICASE_ATP_BIND_1"/>
    <property type="match status" value="1"/>
</dbReference>
<dbReference type="PROSITE" id="PS51194">
    <property type="entry name" value="HELICASE_CTER"/>
    <property type="match status" value="1"/>
</dbReference>
<dbReference type="PROSITE" id="PS50151">
    <property type="entry name" value="UVR"/>
    <property type="match status" value="1"/>
</dbReference>
<gene>
    <name evidence="1" type="primary">uvrB</name>
    <name type="ordered locus">NP_0744A</name>
</gene>
<sequence>MTDTGPLQPDRPDLDRPLSVDAPFEPAGDQPDAIETLVAGFESGAEKQTLLGVTGSGKTNTVSWVLEELQQPTLVLAHNKTLAAQLYEEFRELFPDNAVEYFVSYYDYYQPEAYVEQTDTYIDKDMSINEEIERLRHSATRSLLTRDDVIVVASVSAIYGLGDPANYEEMALRLEAGDERSREDLLSALVELNYERNDVDFQQGTFRVRGDTVEIYPMYGRHAVRVEFWGDEIDRLLKVDIVDGEVVSEEPATLIHPAEHYSVPDRRLETAIEEIEGLLEDRIDYFERQGDLVAAQRIEERTTFDIEMLQETGHCSGIENYSVHMSDRETGEPPYTLLDYFPDGFLTVIDESHQTIPQIKGQFEGDRSRKESLVENGFRLPTAYDNRPLKFEEFEAKTDRTLYVSATPGDYERDHSEQVVEQIVRPTYLVDPDIEVEPAEKQVEDLIERIQATPEDERVLVTTLTKRMAEDLTEYLENAGVDVAYMHDETDTLERHELVRSLRLGEIQVLVGINLLREGLDIPEVSLVAILDADQEGFLRSETTLVQTMGRAARNVEGSVVLYADETTDSMAAAIEETRRRREIQREFNAEHGHEPRTIEKPVSETNLPGSSTDTDGVADVAPDTVDEAEQLIERLETRMQEAADNLEFELAADIRDRIRELRETFDGLEDPNEGVPSPDEEF</sequence>
<feature type="chain" id="PRO_0000227389" description="UvrABC system protein B">
    <location>
        <begin position="1"/>
        <end position="683"/>
    </location>
</feature>
<feature type="domain" description="Helicase ATP-binding" evidence="1">
    <location>
        <begin position="39"/>
        <end position="417"/>
    </location>
</feature>
<feature type="domain" description="Helicase C-terminal" evidence="1">
    <location>
        <begin position="442"/>
        <end position="604"/>
    </location>
</feature>
<feature type="domain" description="UVR" evidence="1">
    <location>
        <begin position="630"/>
        <end position="665"/>
    </location>
</feature>
<feature type="region of interest" description="Disordered" evidence="2">
    <location>
        <begin position="1"/>
        <end position="29"/>
    </location>
</feature>
<feature type="region of interest" description="Disordered" evidence="2">
    <location>
        <begin position="587"/>
        <end position="620"/>
    </location>
</feature>
<feature type="short sequence motif" description="Beta-hairpin">
    <location>
        <begin position="105"/>
        <end position="128"/>
    </location>
</feature>
<feature type="compositionally biased region" description="Basic and acidic residues" evidence="2">
    <location>
        <begin position="587"/>
        <end position="603"/>
    </location>
</feature>
<feature type="compositionally biased region" description="Polar residues" evidence="2">
    <location>
        <begin position="604"/>
        <end position="615"/>
    </location>
</feature>
<feature type="binding site" evidence="1">
    <location>
        <begin position="52"/>
        <end position="59"/>
    </location>
    <ligand>
        <name>ATP</name>
        <dbReference type="ChEBI" id="CHEBI:30616"/>
    </ligand>
</feature>
<evidence type="ECO:0000255" key="1">
    <source>
        <dbReference type="HAMAP-Rule" id="MF_00204"/>
    </source>
</evidence>
<evidence type="ECO:0000256" key="2">
    <source>
        <dbReference type="SAM" id="MobiDB-lite"/>
    </source>
</evidence>
<protein>
    <recommendedName>
        <fullName evidence="1">UvrABC system protein B</fullName>
        <shortName evidence="1">Protein UvrB</shortName>
    </recommendedName>
    <alternativeName>
        <fullName evidence="1">Excinuclease ABC subunit B</fullName>
    </alternativeName>
</protein>
<name>UVRB_NATPD</name>
<organism>
    <name type="scientific">Natronomonas pharaonis (strain ATCC 35678 / DSM 2160 / CIP 103997 / JCM 8858 / NBRC 14720 / NCIMB 2260 / Gabara)</name>
    <name type="common">Halobacterium pharaonis</name>
    <dbReference type="NCBI Taxonomy" id="348780"/>
    <lineage>
        <taxon>Archaea</taxon>
        <taxon>Methanobacteriati</taxon>
        <taxon>Methanobacteriota</taxon>
        <taxon>Stenosarchaea group</taxon>
        <taxon>Halobacteria</taxon>
        <taxon>Halobacteriales</taxon>
        <taxon>Haloarculaceae</taxon>
        <taxon>Natronomonas</taxon>
    </lineage>
</organism>
<accession>Q3ITS0</accession>
<comment type="function">
    <text evidence="1">The UvrABC repair system catalyzes the recognition and processing of DNA lesions. A damage recognition complex composed of 2 UvrA and 2 UvrB subunits scans DNA for abnormalities. Upon binding of the UvrA(2)B(2) complex to a putative damaged site, the DNA wraps around one UvrB monomer. DNA wrap is dependent on ATP binding by UvrB and probably causes local melting of the DNA helix, facilitating insertion of UvrB beta-hairpin between the DNA strands. Then UvrB probes one DNA strand for the presence of a lesion. If a lesion is found the UvrA subunits dissociate and the UvrB-DNA preincision complex is formed. This complex is subsequently bound by UvrC and the second UvrB is released. If no lesion is found, the DNA wraps around the other UvrB subunit that will check the other stand for damage.</text>
</comment>
<comment type="subunit">
    <text evidence="1">Forms a heterotetramer with UvrA during the search for lesions. Interacts with UvrC in an incision complex.</text>
</comment>
<comment type="subcellular location">
    <subcellularLocation>
        <location evidence="1">Cytoplasm</location>
    </subcellularLocation>
</comment>
<comment type="domain">
    <text evidence="1">The beta-hairpin motif is involved in DNA binding.</text>
</comment>
<comment type="similarity">
    <text evidence="1">Belongs to the UvrB family.</text>
</comment>
<reference key="1">
    <citation type="journal article" date="2005" name="Genome Res.">
        <title>Living with two extremes: conclusions from the genome sequence of Natronomonas pharaonis.</title>
        <authorList>
            <person name="Falb M."/>
            <person name="Pfeiffer F."/>
            <person name="Palm P."/>
            <person name="Rodewald K."/>
            <person name="Hickmann V."/>
            <person name="Tittor J."/>
            <person name="Oesterhelt D."/>
        </authorList>
    </citation>
    <scope>NUCLEOTIDE SEQUENCE [LARGE SCALE GENOMIC DNA]</scope>
    <source>
        <strain>ATCC 35678 / DSM 2160 / CIP 103997 / JCM 8858 / NBRC 14720 / NCIMB 2260 / Gabara</strain>
    </source>
</reference>
<proteinExistence type="inferred from homology"/>